<name>PSAJL_NOSS1</name>
<reference key="1">
    <citation type="journal article" date="2001" name="DNA Res.">
        <title>Complete genomic sequence of the filamentous nitrogen-fixing cyanobacterium Anabaena sp. strain PCC 7120.</title>
        <authorList>
            <person name="Kaneko T."/>
            <person name="Nakamura Y."/>
            <person name="Wolk C.P."/>
            <person name="Kuritz T."/>
            <person name="Sasamoto S."/>
            <person name="Watanabe A."/>
            <person name="Iriguchi M."/>
            <person name="Ishikawa A."/>
            <person name="Kawashima K."/>
            <person name="Kimura T."/>
            <person name="Kishida Y."/>
            <person name="Kohara M."/>
            <person name="Matsumoto M."/>
            <person name="Matsuno A."/>
            <person name="Muraki A."/>
            <person name="Nakazaki N."/>
            <person name="Shimpo S."/>
            <person name="Sugimoto M."/>
            <person name="Takazawa M."/>
            <person name="Yamada M."/>
            <person name="Yasuda M."/>
            <person name="Tabata S."/>
        </authorList>
    </citation>
    <scope>NUCLEOTIDE SEQUENCE [LARGE SCALE GENOMIC DNA]</scope>
    <source>
        <strain>PCC 7120 / SAG 25.82 / UTEX 2576</strain>
    </source>
</reference>
<accession>P58569</accession>
<protein>
    <recommendedName>
        <fullName>PsaJ-like protein asl3190</fullName>
    </recommendedName>
</protein>
<proteinExistence type="inferred from homology"/>
<organism>
    <name type="scientific">Nostoc sp. (strain PCC 7120 / SAG 25.82 / UTEX 2576)</name>
    <dbReference type="NCBI Taxonomy" id="103690"/>
    <lineage>
        <taxon>Bacteria</taxon>
        <taxon>Bacillati</taxon>
        <taxon>Cyanobacteriota</taxon>
        <taxon>Cyanophyceae</taxon>
        <taxon>Nostocales</taxon>
        <taxon>Nostocaceae</taxon>
        <taxon>Nostoc</taxon>
    </lineage>
</organism>
<dbReference type="EMBL" id="BA000019">
    <property type="protein sequence ID" value="BAB74889.1"/>
    <property type="molecule type" value="Genomic_DNA"/>
</dbReference>
<dbReference type="PIR" id="AG2204">
    <property type="entry name" value="AG2204"/>
</dbReference>
<dbReference type="SMR" id="P58569"/>
<dbReference type="STRING" id="103690.gene:10495227"/>
<dbReference type="KEGG" id="ana:asl3190"/>
<dbReference type="OrthoDB" id="532702at2"/>
<dbReference type="Proteomes" id="UP000002483">
    <property type="component" value="Chromosome"/>
</dbReference>
<dbReference type="GO" id="GO:0009522">
    <property type="term" value="C:photosystem I"/>
    <property type="evidence" value="ECO:0007669"/>
    <property type="project" value="InterPro"/>
</dbReference>
<dbReference type="GO" id="GO:0031676">
    <property type="term" value="C:plasma membrane-derived thylakoid membrane"/>
    <property type="evidence" value="ECO:0007669"/>
    <property type="project" value="UniProtKB-SubCell"/>
</dbReference>
<dbReference type="GO" id="GO:0015979">
    <property type="term" value="P:photosynthesis"/>
    <property type="evidence" value="ECO:0007669"/>
    <property type="project" value="InterPro"/>
</dbReference>
<dbReference type="Gene3D" id="1.20.5.510">
    <property type="entry name" value="Single helix bin"/>
    <property type="match status" value="1"/>
</dbReference>
<dbReference type="InterPro" id="IPR002615">
    <property type="entry name" value="PSI_PsaJ"/>
</dbReference>
<dbReference type="InterPro" id="IPR036062">
    <property type="entry name" value="PSI_PsaJ_sf"/>
</dbReference>
<dbReference type="Pfam" id="PF01701">
    <property type="entry name" value="PSI_PsaJ"/>
    <property type="match status" value="1"/>
</dbReference>
<dbReference type="SUPFAM" id="SSF81544">
    <property type="entry name" value="Subunit IX of photosystem I reaction centre, PsaJ"/>
    <property type="match status" value="1"/>
</dbReference>
<keyword id="KW-0472">Membrane</keyword>
<keyword id="KW-1185">Reference proteome</keyword>
<keyword id="KW-0793">Thylakoid</keyword>
<keyword id="KW-0812">Transmembrane</keyword>
<keyword id="KW-1133">Transmembrane helix</keyword>
<gene>
    <name type="ordered locus">asl3190</name>
</gene>
<sequence length="50" mass="5807">MNKSQDKEKKYFLEYLSLAPVLAVISISVAFSTWAIFNYIFPDLLFHPLP</sequence>
<evidence type="ECO:0000250" key="1"/>
<evidence type="ECO:0000255" key="2"/>
<evidence type="ECO:0000305" key="3"/>
<feature type="chain" id="PRO_0000207829" description="PsaJ-like protein asl3190">
    <location>
        <begin position="1"/>
        <end position="50"/>
    </location>
</feature>
<feature type="transmembrane region" description="Helical" evidence="2">
    <location>
        <begin position="21"/>
        <end position="41"/>
    </location>
</feature>
<comment type="subcellular location">
    <subcellularLocation>
        <location evidence="1">Cellular thylakoid membrane</location>
        <topology evidence="1">Single-pass membrane protein</topology>
    </subcellularLocation>
</comment>
<comment type="similarity">
    <text evidence="3">Belongs to the PsaJ family.</text>
</comment>